<reference key="1">
    <citation type="journal article" date="2007" name="Photosyn. Res.">
        <title>Complete nucleotide sequence of the freshwater unicellular cyanobacterium Synechococcus elongatus PCC 6301 chromosome: gene content and organization.</title>
        <authorList>
            <person name="Sugita C."/>
            <person name="Ogata K."/>
            <person name="Shikata M."/>
            <person name="Jikuya H."/>
            <person name="Takano J."/>
            <person name="Furumichi M."/>
            <person name="Kanehisa M."/>
            <person name="Omata T."/>
            <person name="Sugiura M."/>
            <person name="Sugita M."/>
        </authorList>
    </citation>
    <scope>NUCLEOTIDE SEQUENCE [LARGE SCALE GENOMIC DNA]</scope>
    <source>
        <strain>ATCC 27144 / PCC 6301 / SAUG 1402/1</strain>
    </source>
</reference>
<protein>
    <recommendedName>
        <fullName evidence="1">4-hydroxy-tetrahydrodipicolinate reductase</fullName>
        <shortName evidence="1">HTPA reductase</shortName>
        <ecNumber evidence="1">1.17.1.8</ecNumber>
    </recommendedName>
</protein>
<accession>Q5N0M4</accession>
<evidence type="ECO:0000255" key="1">
    <source>
        <dbReference type="HAMAP-Rule" id="MF_00102"/>
    </source>
</evidence>
<evidence type="ECO:0000305" key="2"/>
<organism>
    <name type="scientific">Synechococcus sp. (strain ATCC 27144 / PCC 6301 / SAUG 1402/1)</name>
    <name type="common">Anacystis nidulans</name>
    <dbReference type="NCBI Taxonomy" id="269084"/>
    <lineage>
        <taxon>Bacteria</taxon>
        <taxon>Bacillati</taxon>
        <taxon>Cyanobacteriota</taxon>
        <taxon>Cyanophyceae</taxon>
        <taxon>Synechococcales</taxon>
        <taxon>Synechococcaceae</taxon>
        <taxon>Synechococcus</taxon>
    </lineage>
</organism>
<feature type="chain" id="PRO_0000228396" description="4-hydroxy-tetrahydrodipicolinate reductase">
    <location>
        <begin position="1"/>
        <end position="273"/>
    </location>
</feature>
<feature type="active site" description="Proton donor/acceptor" evidence="1">
    <location>
        <position position="162"/>
    </location>
</feature>
<feature type="active site" description="Proton donor" evidence="1">
    <location>
        <position position="166"/>
    </location>
</feature>
<feature type="binding site" evidence="1">
    <location>
        <begin position="11"/>
        <end position="16"/>
    </location>
    <ligand>
        <name>NAD(+)</name>
        <dbReference type="ChEBI" id="CHEBI:57540"/>
    </ligand>
</feature>
<feature type="binding site" evidence="1">
    <location>
        <begin position="106"/>
        <end position="108"/>
    </location>
    <ligand>
        <name>NAD(+)</name>
        <dbReference type="ChEBI" id="CHEBI:57540"/>
    </ligand>
</feature>
<feature type="binding site" evidence="1">
    <location>
        <position position="163"/>
    </location>
    <ligand>
        <name>(S)-2,3,4,5-tetrahydrodipicolinate</name>
        <dbReference type="ChEBI" id="CHEBI:16845"/>
    </ligand>
</feature>
<feature type="binding site" evidence="1">
    <location>
        <begin position="172"/>
        <end position="173"/>
    </location>
    <ligand>
        <name>(S)-2,3,4,5-tetrahydrodipicolinate</name>
        <dbReference type="ChEBI" id="CHEBI:16845"/>
    </ligand>
</feature>
<keyword id="KW-0028">Amino-acid biosynthesis</keyword>
<keyword id="KW-0963">Cytoplasm</keyword>
<keyword id="KW-0220">Diaminopimelate biosynthesis</keyword>
<keyword id="KW-0457">Lysine biosynthesis</keyword>
<keyword id="KW-0520">NAD</keyword>
<keyword id="KW-0521">NADP</keyword>
<keyword id="KW-0560">Oxidoreductase</keyword>
<dbReference type="EC" id="1.17.1.8" evidence="1"/>
<dbReference type="EMBL" id="AP008231">
    <property type="protein sequence ID" value="BAD80146.1"/>
    <property type="molecule type" value="Genomic_DNA"/>
</dbReference>
<dbReference type="RefSeq" id="WP_011244266.1">
    <property type="nucleotide sequence ID" value="NC_006576.1"/>
</dbReference>
<dbReference type="SMR" id="Q5N0M4"/>
<dbReference type="KEGG" id="syc:syc1956_d"/>
<dbReference type="eggNOG" id="COG0289">
    <property type="taxonomic scope" value="Bacteria"/>
</dbReference>
<dbReference type="UniPathway" id="UPA00034">
    <property type="reaction ID" value="UER00018"/>
</dbReference>
<dbReference type="Proteomes" id="UP000001175">
    <property type="component" value="Chromosome"/>
</dbReference>
<dbReference type="GO" id="GO:0005829">
    <property type="term" value="C:cytosol"/>
    <property type="evidence" value="ECO:0007669"/>
    <property type="project" value="TreeGrafter"/>
</dbReference>
<dbReference type="GO" id="GO:0008839">
    <property type="term" value="F:4-hydroxy-tetrahydrodipicolinate reductase"/>
    <property type="evidence" value="ECO:0007669"/>
    <property type="project" value="UniProtKB-EC"/>
</dbReference>
<dbReference type="GO" id="GO:0051287">
    <property type="term" value="F:NAD binding"/>
    <property type="evidence" value="ECO:0007669"/>
    <property type="project" value="UniProtKB-UniRule"/>
</dbReference>
<dbReference type="GO" id="GO:0050661">
    <property type="term" value="F:NADP binding"/>
    <property type="evidence" value="ECO:0007669"/>
    <property type="project" value="UniProtKB-UniRule"/>
</dbReference>
<dbReference type="GO" id="GO:0016726">
    <property type="term" value="F:oxidoreductase activity, acting on CH or CH2 groups, NAD or NADP as acceptor"/>
    <property type="evidence" value="ECO:0007669"/>
    <property type="project" value="UniProtKB-UniRule"/>
</dbReference>
<dbReference type="GO" id="GO:0019877">
    <property type="term" value="P:diaminopimelate biosynthetic process"/>
    <property type="evidence" value="ECO:0007669"/>
    <property type="project" value="UniProtKB-UniRule"/>
</dbReference>
<dbReference type="GO" id="GO:0009089">
    <property type="term" value="P:lysine biosynthetic process via diaminopimelate"/>
    <property type="evidence" value="ECO:0007669"/>
    <property type="project" value="UniProtKB-UniRule"/>
</dbReference>
<dbReference type="CDD" id="cd02274">
    <property type="entry name" value="DHDPR_N"/>
    <property type="match status" value="1"/>
</dbReference>
<dbReference type="FunFam" id="3.30.360.10:FF:000009">
    <property type="entry name" value="4-hydroxy-tetrahydrodipicolinate reductase"/>
    <property type="match status" value="1"/>
</dbReference>
<dbReference type="Gene3D" id="3.30.360.10">
    <property type="entry name" value="Dihydrodipicolinate Reductase, domain 2"/>
    <property type="match status" value="1"/>
</dbReference>
<dbReference type="Gene3D" id="3.40.50.720">
    <property type="entry name" value="NAD(P)-binding Rossmann-like Domain"/>
    <property type="match status" value="1"/>
</dbReference>
<dbReference type="HAMAP" id="MF_00102">
    <property type="entry name" value="DapB"/>
    <property type="match status" value="1"/>
</dbReference>
<dbReference type="InterPro" id="IPR022663">
    <property type="entry name" value="DapB_C"/>
</dbReference>
<dbReference type="InterPro" id="IPR000846">
    <property type="entry name" value="DapB_N"/>
</dbReference>
<dbReference type="InterPro" id="IPR022664">
    <property type="entry name" value="DapB_N_CS"/>
</dbReference>
<dbReference type="InterPro" id="IPR023940">
    <property type="entry name" value="DHDPR_bac"/>
</dbReference>
<dbReference type="InterPro" id="IPR036291">
    <property type="entry name" value="NAD(P)-bd_dom_sf"/>
</dbReference>
<dbReference type="NCBIfam" id="TIGR00036">
    <property type="entry name" value="dapB"/>
    <property type="match status" value="1"/>
</dbReference>
<dbReference type="PANTHER" id="PTHR20836:SF0">
    <property type="entry name" value="4-HYDROXY-TETRAHYDRODIPICOLINATE REDUCTASE 1, CHLOROPLASTIC-RELATED"/>
    <property type="match status" value="1"/>
</dbReference>
<dbReference type="PANTHER" id="PTHR20836">
    <property type="entry name" value="DIHYDRODIPICOLINATE REDUCTASE"/>
    <property type="match status" value="1"/>
</dbReference>
<dbReference type="Pfam" id="PF05173">
    <property type="entry name" value="DapB_C"/>
    <property type="match status" value="1"/>
</dbReference>
<dbReference type="Pfam" id="PF01113">
    <property type="entry name" value="DapB_N"/>
    <property type="match status" value="1"/>
</dbReference>
<dbReference type="PIRSF" id="PIRSF000161">
    <property type="entry name" value="DHPR"/>
    <property type="match status" value="1"/>
</dbReference>
<dbReference type="SUPFAM" id="SSF55347">
    <property type="entry name" value="Glyceraldehyde-3-phosphate dehydrogenase-like, C-terminal domain"/>
    <property type="match status" value="1"/>
</dbReference>
<dbReference type="SUPFAM" id="SSF51735">
    <property type="entry name" value="NAD(P)-binding Rossmann-fold domains"/>
    <property type="match status" value="1"/>
</dbReference>
<dbReference type="PROSITE" id="PS01298">
    <property type="entry name" value="DAPB"/>
    <property type="match status" value="1"/>
</dbReference>
<comment type="function">
    <text evidence="1">Catalyzes the conversion of 4-hydroxy-tetrahydrodipicolinate (HTPA) to tetrahydrodipicolinate.</text>
</comment>
<comment type="catalytic activity">
    <reaction evidence="1">
        <text>(S)-2,3,4,5-tetrahydrodipicolinate + NAD(+) + H2O = (2S,4S)-4-hydroxy-2,3,4,5-tetrahydrodipicolinate + NADH + H(+)</text>
        <dbReference type="Rhea" id="RHEA:35323"/>
        <dbReference type="ChEBI" id="CHEBI:15377"/>
        <dbReference type="ChEBI" id="CHEBI:15378"/>
        <dbReference type="ChEBI" id="CHEBI:16845"/>
        <dbReference type="ChEBI" id="CHEBI:57540"/>
        <dbReference type="ChEBI" id="CHEBI:57945"/>
        <dbReference type="ChEBI" id="CHEBI:67139"/>
        <dbReference type="EC" id="1.17.1.8"/>
    </reaction>
</comment>
<comment type="catalytic activity">
    <reaction evidence="1">
        <text>(S)-2,3,4,5-tetrahydrodipicolinate + NADP(+) + H2O = (2S,4S)-4-hydroxy-2,3,4,5-tetrahydrodipicolinate + NADPH + H(+)</text>
        <dbReference type="Rhea" id="RHEA:35331"/>
        <dbReference type="ChEBI" id="CHEBI:15377"/>
        <dbReference type="ChEBI" id="CHEBI:15378"/>
        <dbReference type="ChEBI" id="CHEBI:16845"/>
        <dbReference type="ChEBI" id="CHEBI:57783"/>
        <dbReference type="ChEBI" id="CHEBI:58349"/>
        <dbReference type="ChEBI" id="CHEBI:67139"/>
        <dbReference type="EC" id="1.17.1.8"/>
    </reaction>
</comment>
<comment type="pathway">
    <text evidence="1">Amino-acid biosynthesis; L-lysine biosynthesis via DAP pathway; (S)-tetrahydrodipicolinate from L-aspartate: step 4/4.</text>
</comment>
<comment type="subcellular location">
    <subcellularLocation>
        <location evidence="1">Cytoplasm</location>
    </subcellularLocation>
</comment>
<comment type="similarity">
    <text evidence="1">Belongs to the DapB family.</text>
</comment>
<comment type="caution">
    <text evidence="2">Was originally thought to be a dihydrodipicolinate reductase (DHDPR), catalyzing the conversion of dihydrodipicolinate to tetrahydrodipicolinate. However, it was shown in E.coli that the substrate of the enzymatic reaction is not dihydrodipicolinate (DHDP) but in fact (2S,4S)-4-hydroxy-2,3,4,5-tetrahydrodipicolinic acid (HTPA), the product released by the DapA-catalyzed reaction.</text>
</comment>
<name>DAPB_SYNP6</name>
<proteinExistence type="inferred from homology"/>
<sequence>MAHPIPVVVNGATGKMGRETIKAIAAADDVTLVGAIARSADVQGQDIGEIVGLGPLEVPVTNDLEGMLCLASQEREVPVVVDFTHPDCIYDNVRKAIAYGVRPVVGTTGLNNEQLQELAEFAEKASVGCLVIPNFSIGMVLLMQAAIQASRFYDHVEILELHHDQKADAPSGTAIKTAQMLAELGKTFNPPKVTEKETMPGARGAVGPENIRIHSVRLPGLIAHEEVIFGAPGEILTLRHDTMDRSCYMPGVLLAVRKVRQLTGLIYGLDRIP</sequence>
<gene>
    <name evidence="1" type="primary">dapB</name>
    <name type="ordered locus">syc1956_d</name>
</gene>